<organism>
    <name type="scientific">Bacteroides uniformis (strain ATCC 8492 / DSM 6597 / CCUG 4942 / CIP 103695 / JCM 5828 / KCTC 5204 / NCTC 13054 / VPI 0061)</name>
    <dbReference type="NCBI Taxonomy" id="411479"/>
    <lineage>
        <taxon>Bacteria</taxon>
        <taxon>Pseudomonadati</taxon>
        <taxon>Bacteroidota</taxon>
        <taxon>Bacteroidia</taxon>
        <taxon>Bacteroidales</taxon>
        <taxon>Bacteroidaceae</taxon>
        <taxon>Bacteroides</taxon>
    </lineage>
</organism>
<dbReference type="EMBL" id="AAYH02000035">
    <property type="protein sequence ID" value="EDO55779.1"/>
    <property type="molecule type" value="Genomic_DNA"/>
</dbReference>
<dbReference type="RefSeq" id="WP_005825443.1">
    <property type="nucleotide sequence ID" value="NZ_DS362236.1"/>
</dbReference>
<dbReference type="PDB" id="4K4K">
    <property type="method" value="X-ray"/>
    <property type="resolution" value="1.67 A"/>
    <property type="chains" value="A/B=23-303"/>
</dbReference>
<dbReference type="PDBsum" id="4K4K"/>
<dbReference type="SMR" id="A7UZ95"/>
<dbReference type="PaxDb" id="411479-BACUNI_00621"/>
<dbReference type="eggNOG" id="ENOG50331SI">
    <property type="taxonomic scope" value="Bacteria"/>
</dbReference>
<dbReference type="HOGENOM" id="CLU_071232_0_0_10"/>
<dbReference type="EvolutionaryTrace" id="A7UZ95"/>
<dbReference type="Proteomes" id="UP000004110">
    <property type="component" value="Unassembled WGS sequence"/>
</dbReference>
<dbReference type="GO" id="GO:0009289">
    <property type="term" value="C:pilus"/>
    <property type="evidence" value="ECO:0007669"/>
    <property type="project" value="UniProtKB-SubCell"/>
</dbReference>
<dbReference type="CDD" id="cd13121">
    <property type="entry name" value="BF2867_like_C"/>
    <property type="match status" value="1"/>
</dbReference>
<dbReference type="CDD" id="cd13120">
    <property type="entry name" value="BF2867_like_N"/>
    <property type="match status" value="1"/>
</dbReference>
<dbReference type="Gene3D" id="2.60.40.2630">
    <property type="match status" value="1"/>
</dbReference>
<dbReference type="Gene3D" id="2.60.40.2620">
    <property type="entry name" value="Fimbrillin-like"/>
    <property type="match status" value="1"/>
</dbReference>
<dbReference type="InterPro" id="IPR025049">
    <property type="entry name" value="Mfa-like_1"/>
</dbReference>
<dbReference type="InterPro" id="IPR042278">
    <property type="entry name" value="Mfa-like_1_N"/>
</dbReference>
<dbReference type="Pfam" id="PF13149">
    <property type="entry name" value="Mfa_like_1"/>
    <property type="match status" value="1"/>
</dbReference>
<name>FIM1C_BACUC</name>
<gene>
    <name type="primary">fim1C</name>
    <name evidence="5" type="ORF">BACUNI_00621</name>
</gene>
<comment type="function">
    <text evidence="4">Putative component of the fimbrium tip. Fimbriae are filamentous appendages on the cell surface that mediate cell adhesion and biofilm formation.</text>
</comment>
<comment type="subunit">
    <text evidence="4">May be part of the fimbrial tip.</text>
</comment>
<comment type="subcellular location">
    <subcellularLocation>
        <location evidence="4">Fimbrium</location>
    </subcellularLocation>
</comment>
<comment type="similarity">
    <text evidence="3">Belongs to the bacteroidetes fimbrillin superfamily. Mfa-like family.</text>
</comment>
<comment type="caution">
    <text evidence="3">Lacks the lipidation signal found in other family members, suggesting it may not be exported to the cell surface, and may not be part of the fimbriae.</text>
</comment>
<evidence type="ECO:0000255" key="1"/>
<evidence type="ECO:0000303" key="2">
    <source>
    </source>
</evidence>
<evidence type="ECO:0000305" key="3"/>
<evidence type="ECO:0000305" key="4">
    <source>
    </source>
</evidence>
<evidence type="ECO:0000312" key="5">
    <source>
        <dbReference type="EMBL" id="EDO55779.1"/>
    </source>
</evidence>
<evidence type="ECO:0007829" key="6">
    <source>
        <dbReference type="PDB" id="4K4K"/>
    </source>
</evidence>
<keyword id="KW-0002">3D-structure</keyword>
<keyword id="KW-0281">Fimbrium</keyword>
<keyword id="KW-1185">Reference proteome</keyword>
<keyword id="KW-0732">Signal</keyword>
<accession>A7UZ95</accession>
<proteinExistence type="evidence at protein level"/>
<protein>
    <recommendedName>
        <fullName>Putative fimbrium subunit Fim1C</fullName>
    </recommendedName>
</protein>
<feature type="signal peptide" evidence="1">
    <location>
        <begin position="1"/>
        <end position="22"/>
    </location>
</feature>
<feature type="chain" id="PRO_5002714097" description="Putative fimbrium subunit Fim1C">
    <location>
        <begin position="23"/>
        <end position="303"/>
    </location>
</feature>
<feature type="strand" evidence="6">
    <location>
        <begin position="30"/>
        <end position="32"/>
    </location>
</feature>
<feature type="strand" evidence="6">
    <location>
        <begin position="37"/>
        <end position="39"/>
    </location>
</feature>
<feature type="strand" evidence="6">
    <location>
        <begin position="58"/>
        <end position="65"/>
    </location>
</feature>
<feature type="strand" evidence="6">
    <location>
        <begin position="71"/>
        <end position="78"/>
    </location>
</feature>
<feature type="strand" evidence="6">
    <location>
        <begin position="105"/>
        <end position="112"/>
    </location>
</feature>
<feature type="turn" evidence="6">
    <location>
        <begin position="119"/>
        <end position="121"/>
    </location>
</feature>
<feature type="strand" evidence="6">
    <location>
        <begin position="122"/>
        <end position="126"/>
    </location>
</feature>
<feature type="helix" evidence="6">
    <location>
        <begin position="133"/>
        <end position="135"/>
    </location>
</feature>
<feature type="strand" evidence="6">
    <location>
        <begin position="139"/>
        <end position="147"/>
    </location>
</feature>
<feature type="strand" evidence="6">
    <location>
        <begin position="153"/>
        <end position="155"/>
    </location>
</feature>
<feature type="strand" evidence="6">
    <location>
        <begin position="158"/>
        <end position="171"/>
    </location>
</feature>
<feature type="strand" evidence="6">
    <location>
        <begin position="173"/>
        <end position="175"/>
    </location>
</feature>
<feature type="helix" evidence="6">
    <location>
        <begin position="178"/>
        <end position="181"/>
    </location>
</feature>
<feature type="strand" evidence="6">
    <location>
        <begin position="185"/>
        <end position="191"/>
    </location>
</feature>
<feature type="strand" evidence="6">
    <location>
        <begin position="194"/>
        <end position="198"/>
    </location>
</feature>
<feature type="turn" evidence="6">
    <location>
        <begin position="199"/>
        <end position="201"/>
    </location>
</feature>
<feature type="strand" evidence="6">
    <location>
        <begin position="213"/>
        <end position="216"/>
    </location>
</feature>
<feature type="strand" evidence="6">
    <location>
        <begin position="218"/>
        <end position="220"/>
    </location>
</feature>
<feature type="strand" evidence="6">
    <location>
        <begin position="223"/>
        <end position="228"/>
    </location>
</feature>
<feature type="strand" evidence="6">
    <location>
        <begin position="238"/>
        <end position="242"/>
    </location>
</feature>
<feature type="helix" evidence="6">
    <location>
        <begin position="244"/>
        <end position="246"/>
    </location>
</feature>
<feature type="strand" evidence="6">
    <location>
        <begin position="250"/>
        <end position="254"/>
    </location>
</feature>
<feature type="helix" evidence="6">
    <location>
        <begin position="255"/>
        <end position="257"/>
    </location>
</feature>
<feature type="strand" evidence="6">
    <location>
        <begin position="262"/>
        <end position="264"/>
    </location>
</feature>
<feature type="strand" evidence="6">
    <location>
        <begin position="268"/>
        <end position="277"/>
    </location>
</feature>
<feature type="strand" evidence="6">
    <location>
        <begin position="280"/>
        <end position="289"/>
    </location>
</feature>
<reference evidence="5" key="1">
    <citation type="submission" date="2007-07" db="EMBL/GenBank/DDBJ databases">
        <title>Draft genome sequence of Bacteroides uniformis (ATCC 8492).</title>
        <authorList>
            <person name="Sudarsanam P."/>
            <person name="Ley R."/>
            <person name="Guruge J."/>
            <person name="Turnbaugh P.J."/>
            <person name="Mahowald M."/>
            <person name="Liep D."/>
            <person name="Gordon J."/>
        </authorList>
    </citation>
    <scope>NUCLEOTIDE SEQUENCE [LARGE SCALE GENOMIC DNA]</scope>
    <source>
        <strain evidence="5">ATCC 8492 / DSM 6597 / CCUG 4942 / CIP 103695 / JCM 5828 / KCTC 5204 / NCTC 13054 / VPI 0061</strain>
    </source>
</reference>
<reference key="2">
    <citation type="journal article" date="2016" name="Cell">
        <title>A distinct type of pilus from the human microbiome.</title>
        <authorList>
            <person name="Xu Q."/>
            <person name="Shoji M."/>
            <person name="Shibata S."/>
            <person name="Naito M."/>
            <person name="Sato K."/>
            <person name="Elsliger M.A."/>
            <person name="Grant J.C."/>
            <person name="Axelrod H.L."/>
            <person name="Chiu H.J."/>
            <person name="Farr C.L."/>
            <person name="Jaroszewski L."/>
            <person name="Knuth M.W."/>
            <person name="Deacon A.M."/>
            <person name="Godzik A."/>
            <person name="Lesley S.A."/>
            <person name="Curtis M.A."/>
            <person name="Nakayama K."/>
            <person name="Wilson I.A."/>
        </authorList>
    </citation>
    <scope>X-RAY CRYSTALLOGRAPHY (1.67 ANGSTROMS) OF 23-303</scope>
    <scope>FUNCTION</scope>
    <scope>SUBUNIT</scope>
    <scope>SUBCELLULAR LOCATION</scope>
    <source>
        <strain evidence="2">ATCC 8492 / DSM 6597 / CCUG 4942 / CIP 103695 / JCM 5828 / KCTC 5204 / NCTC 13054 / VPI 0061</strain>
    </source>
</reference>
<sequence>MKKQALICALLATVLLPGCSEDGENTPQPTDGRVALEATSGIRMNTRAYDKTWEAGDAIGIYMLNGDATDGNGNRKYTTAQTAENGSFTAAEGQTIYFPVDASQRDFVAYYPYRETLADGNVYTVDVSVQTPQKDIDLMGAAKVEGKDKTDPKVAFVFTHKLVKLDITIKADGTSLTDADLAGTTVSISNQQTAATYNVVTGGDATVTTGTTKEIVLHTDGLKAEGIVLPAASTAGMALTFTVPGLEGQAFHWDVNSAAQSKAFVAGSKYLYTITISKAGVEVSSKVEDWTPGNGGGETGNAE</sequence>